<evidence type="ECO:0000250" key="1">
    <source>
        <dbReference type="UniProtKB" id="P70302"/>
    </source>
</evidence>
<evidence type="ECO:0000250" key="2">
    <source>
        <dbReference type="UniProtKB" id="Q13586"/>
    </source>
</evidence>
<evidence type="ECO:0000255" key="3"/>
<evidence type="ECO:0000255" key="4">
    <source>
        <dbReference type="PROSITE-ProRule" id="PRU00184"/>
    </source>
</evidence>
<evidence type="ECO:0000256" key="5">
    <source>
        <dbReference type="SAM" id="MobiDB-lite"/>
    </source>
</evidence>
<reference key="1">
    <citation type="journal article" date="2005" name="BMC Genomics">
        <title>Characterization of 954 bovine full-CDS cDNA sequences.</title>
        <authorList>
            <person name="Harhay G.P."/>
            <person name="Sonstegard T.S."/>
            <person name="Keele J.W."/>
            <person name="Heaton M.P."/>
            <person name="Clawson M.L."/>
            <person name="Snelling W.M."/>
            <person name="Wiedmann R.T."/>
            <person name="Van Tassell C.P."/>
            <person name="Smith T.P.L."/>
        </authorList>
    </citation>
    <scope>NUCLEOTIDE SEQUENCE [LARGE SCALE MRNA]</scope>
</reference>
<protein>
    <recommendedName>
        <fullName>Stromal interaction molecule 1</fullName>
    </recommendedName>
</protein>
<sequence length="683" mass="77151">MDVCARLALWLLWGLLLHHGQSLSQSHSEKATGSGANSEESTAAEFCRIDKPLCHSEDEKLSFDAVRSIHKLMDDDANGDVDVEESDEFLREDLNYHDPTVKHSTFHGEDKLISVEDLWKAWKSSEVYNWTVDEVVQWLITYVELPQYEETFRKLQLSGHAMPRLAVTNTTMTGTVLKMTDRSHRQKLQLKALDTVLFGPPLLTRHNHLKDFMLVVSIVIGVGGCWFAYIQNRYSKEHMKKMMKDLEGLHRAEQSLHDLQERLHKAQEEHRTVEVEKVHLEKKLRDEINLAKQEAQRLKELREGTENERSRQKYAEEELEQVREALRKAEKELESHSSWYAPEALQKWLQLTHEVEVQYYNIKKQNAEKQLLVAKEGAEKIKKKRNTLFGTFHVAHSSSLDDVDHKILTAKQALSEVTAALRERLHRWQQIEILCGFQIVNNPGIHSLVAALNIDPSWMGSTRPNPAHFIMTDDVDDMDEEIVSPLSMQSPSLQSSVRQRLTEPQHGLGSQRDLTHSDSESSLHMSDRQRLAPKPPQMIRAADEALSAMTSNGSHRLIEGAHPGSLVEKLPDSPALAKKALLALNHGLDKAHSLMELSSPALPSGSPHLDSSRSHSPSPPDPDTPSPAGDSRALQASRNTRIPHLAGKKAAAEEDNGSIGEETDSSPGRKKFPLKIFKKPLKK</sequence>
<accession>Q58CP9</accession>
<gene>
    <name type="primary">STIM1</name>
</gene>
<name>STIM1_BOVIN</name>
<organism>
    <name type="scientific">Bos taurus</name>
    <name type="common">Bovine</name>
    <dbReference type="NCBI Taxonomy" id="9913"/>
    <lineage>
        <taxon>Eukaryota</taxon>
        <taxon>Metazoa</taxon>
        <taxon>Chordata</taxon>
        <taxon>Craniata</taxon>
        <taxon>Vertebrata</taxon>
        <taxon>Euteleostomi</taxon>
        <taxon>Mammalia</taxon>
        <taxon>Eutheria</taxon>
        <taxon>Laurasiatheria</taxon>
        <taxon>Artiodactyla</taxon>
        <taxon>Ruminantia</taxon>
        <taxon>Pecora</taxon>
        <taxon>Bovidae</taxon>
        <taxon>Bovinae</taxon>
        <taxon>Bos</taxon>
    </lineage>
</organism>
<proteinExistence type="evidence at transcript level"/>
<keyword id="KW-0106">Calcium</keyword>
<keyword id="KW-0109">Calcium transport</keyword>
<keyword id="KW-1003">Cell membrane</keyword>
<keyword id="KW-0175">Coiled coil</keyword>
<keyword id="KW-0963">Cytoplasm</keyword>
<keyword id="KW-0206">Cytoskeleton</keyword>
<keyword id="KW-0256">Endoplasmic reticulum</keyword>
<keyword id="KW-0325">Glycoprotein</keyword>
<keyword id="KW-0406">Ion transport</keyword>
<keyword id="KW-0472">Membrane</keyword>
<keyword id="KW-0479">Metal-binding</keyword>
<keyword id="KW-0493">Microtubule</keyword>
<keyword id="KW-0597">Phosphoprotein</keyword>
<keyword id="KW-1185">Reference proteome</keyword>
<keyword id="KW-0703">Sarcoplasmic reticulum</keyword>
<keyword id="KW-0732">Signal</keyword>
<keyword id="KW-0812">Transmembrane</keyword>
<keyword id="KW-1133">Transmembrane helix</keyword>
<keyword id="KW-0813">Transport</keyword>
<dbReference type="EMBL" id="BT021898">
    <property type="protein sequence ID" value="AAX46745.1"/>
    <property type="molecule type" value="mRNA"/>
</dbReference>
<dbReference type="RefSeq" id="NP_001030486.1">
    <property type="nucleotide sequence ID" value="NM_001035409.1"/>
</dbReference>
<dbReference type="SMR" id="Q58CP9"/>
<dbReference type="FunCoup" id="Q58CP9">
    <property type="interactions" value="1841"/>
</dbReference>
<dbReference type="STRING" id="9913.ENSBTAP00000073088"/>
<dbReference type="GlyCosmos" id="Q58CP9">
    <property type="glycosylation" value="2 sites, No reported glycans"/>
</dbReference>
<dbReference type="GlyGen" id="Q58CP9">
    <property type="glycosylation" value="2 sites"/>
</dbReference>
<dbReference type="iPTMnet" id="Q58CP9"/>
<dbReference type="PaxDb" id="9913-ENSBTAP00000017425"/>
<dbReference type="PeptideAtlas" id="Q58CP9"/>
<dbReference type="GeneID" id="534816"/>
<dbReference type="KEGG" id="bta:534816"/>
<dbReference type="CTD" id="6786"/>
<dbReference type="eggNOG" id="KOG4403">
    <property type="taxonomic scope" value="Eukaryota"/>
</dbReference>
<dbReference type="InParanoid" id="Q58CP9"/>
<dbReference type="OrthoDB" id="9986177at2759"/>
<dbReference type="Proteomes" id="UP000009136">
    <property type="component" value="Unplaced"/>
</dbReference>
<dbReference type="GO" id="GO:0005783">
    <property type="term" value="C:endoplasmic reticulum"/>
    <property type="evidence" value="ECO:0000250"/>
    <property type="project" value="UniProtKB"/>
</dbReference>
<dbReference type="GO" id="GO:0005789">
    <property type="term" value="C:endoplasmic reticulum membrane"/>
    <property type="evidence" value="ECO:0000250"/>
    <property type="project" value="AgBase"/>
</dbReference>
<dbReference type="GO" id="GO:0005874">
    <property type="term" value="C:microtubule"/>
    <property type="evidence" value="ECO:0007669"/>
    <property type="project" value="UniProtKB-KW"/>
</dbReference>
<dbReference type="GO" id="GO:0005886">
    <property type="term" value="C:plasma membrane"/>
    <property type="evidence" value="ECO:0000250"/>
    <property type="project" value="UniProtKB"/>
</dbReference>
<dbReference type="GO" id="GO:0044853">
    <property type="term" value="C:plasma membrane raft"/>
    <property type="evidence" value="ECO:0000250"/>
    <property type="project" value="UniProtKB"/>
</dbReference>
<dbReference type="GO" id="GO:0033017">
    <property type="term" value="C:sarcoplasmic reticulum membrane"/>
    <property type="evidence" value="ECO:0000250"/>
    <property type="project" value="UniProtKB"/>
</dbReference>
<dbReference type="GO" id="GO:0005246">
    <property type="term" value="F:calcium channel regulator activity"/>
    <property type="evidence" value="ECO:0000250"/>
    <property type="project" value="UniProtKB"/>
</dbReference>
<dbReference type="GO" id="GO:0005509">
    <property type="term" value="F:calcium ion binding"/>
    <property type="evidence" value="ECO:0000250"/>
    <property type="project" value="AgBase"/>
</dbReference>
<dbReference type="GO" id="GO:0051010">
    <property type="term" value="F:microtubule plus-end binding"/>
    <property type="evidence" value="ECO:0000250"/>
    <property type="project" value="UniProtKB"/>
</dbReference>
<dbReference type="GO" id="GO:0032237">
    <property type="term" value="P:activation of store-operated calcium channel activity"/>
    <property type="evidence" value="ECO:0000250"/>
    <property type="project" value="AgBase"/>
</dbReference>
<dbReference type="GO" id="GO:0005513">
    <property type="term" value="P:detection of calcium ion"/>
    <property type="evidence" value="ECO:0000250"/>
    <property type="project" value="AgBase"/>
</dbReference>
<dbReference type="GO" id="GO:0070166">
    <property type="term" value="P:enamel mineralization"/>
    <property type="evidence" value="ECO:0000250"/>
    <property type="project" value="UniProtKB"/>
</dbReference>
<dbReference type="GO" id="GO:0006874">
    <property type="term" value="P:intracellular calcium ion homeostasis"/>
    <property type="evidence" value="ECO:0000318"/>
    <property type="project" value="GO_Central"/>
</dbReference>
<dbReference type="GO" id="GO:0045762">
    <property type="term" value="P:positive regulation of adenylate cyclase activity"/>
    <property type="evidence" value="ECO:0000250"/>
    <property type="project" value="UniProtKB"/>
</dbReference>
<dbReference type="GO" id="GO:0051924">
    <property type="term" value="P:regulation of calcium ion transport"/>
    <property type="evidence" value="ECO:0000250"/>
    <property type="project" value="AgBase"/>
</dbReference>
<dbReference type="GO" id="GO:2001256">
    <property type="term" value="P:regulation of store-operated calcium entry"/>
    <property type="evidence" value="ECO:0000250"/>
    <property type="project" value="UniProtKB"/>
</dbReference>
<dbReference type="GO" id="GO:0002115">
    <property type="term" value="P:store-operated calcium entry"/>
    <property type="evidence" value="ECO:0000250"/>
    <property type="project" value="UniProtKB"/>
</dbReference>
<dbReference type="CDD" id="cd09573">
    <property type="entry name" value="SAM_STIM1"/>
    <property type="match status" value="1"/>
</dbReference>
<dbReference type="CDD" id="cd11722">
    <property type="entry name" value="SOAR"/>
    <property type="match status" value="1"/>
</dbReference>
<dbReference type="FunFam" id="1.10.150.50:FF:000009">
    <property type="entry name" value="Stromal interaction molecule 1"/>
    <property type="match status" value="1"/>
</dbReference>
<dbReference type="FunFam" id="1.10.238.180:FF:000001">
    <property type="entry name" value="Stromal interaction molecule 1"/>
    <property type="match status" value="1"/>
</dbReference>
<dbReference type="FunFam" id="1.10.287.3550:FF:000001">
    <property type="entry name" value="Stromal interaction molecule 1"/>
    <property type="match status" value="1"/>
</dbReference>
<dbReference type="FunFam" id="1.20.5.340:FF:000011">
    <property type="entry name" value="Stromal interaction molecule 1"/>
    <property type="match status" value="1"/>
</dbReference>
<dbReference type="Gene3D" id="1.10.238.180">
    <property type="match status" value="1"/>
</dbReference>
<dbReference type="Gene3D" id="1.10.287.3550">
    <property type="match status" value="1"/>
</dbReference>
<dbReference type="Gene3D" id="1.20.5.340">
    <property type="match status" value="1"/>
</dbReference>
<dbReference type="Gene3D" id="1.10.150.50">
    <property type="entry name" value="Transcription Factor, Ets-1"/>
    <property type="match status" value="1"/>
</dbReference>
<dbReference type="InterPro" id="IPR001660">
    <property type="entry name" value="SAM"/>
</dbReference>
<dbReference type="InterPro" id="IPR013761">
    <property type="entry name" value="SAM/pointed_sf"/>
</dbReference>
<dbReference type="InterPro" id="IPR032393">
    <property type="entry name" value="SOAR"/>
</dbReference>
<dbReference type="InterPro" id="IPR037608">
    <property type="entry name" value="STIM"/>
</dbReference>
<dbReference type="InterPro" id="IPR037609">
    <property type="entry name" value="STIM1_SAM"/>
</dbReference>
<dbReference type="PANTHER" id="PTHR15136:SF9">
    <property type="entry name" value="STROMAL INTERACTION MOLECULE 1"/>
    <property type="match status" value="1"/>
</dbReference>
<dbReference type="PANTHER" id="PTHR15136">
    <property type="entry name" value="STROMAL INTERACTION MOLECULE HOMOLOG"/>
    <property type="match status" value="1"/>
</dbReference>
<dbReference type="Pfam" id="PF07647">
    <property type="entry name" value="SAM_2"/>
    <property type="match status" value="1"/>
</dbReference>
<dbReference type="Pfam" id="PF16533">
    <property type="entry name" value="SOAR"/>
    <property type="match status" value="1"/>
</dbReference>
<dbReference type="SMART" id="SM00454">
    <property type="entry name" value="SAM"/>
    <property type="match status" value="1"/>
</dbReference>
<dbReference type="SUPFAM" id="SSF47769">
    <property type="entry name" value="SAM/Pointed domain"/>
    <property type="match status" value="1"/>
</dbReference>
<dbReference type="PROSITE" id="PS50105">
    <property type="entry name" value="SAM_DOMAIN"/>
    <property type="match status" value="1"/>
</dbReference>
<feature type="signal peptide" evidence="3">
    <location>
        <begin position="1"/>
        <end position="22"/>
    </location>
</feature>
<feature type="chain" id="PRO_0000253465" description="Stromal interaction molecule 1">
    <location>
        <begin position="23"/>
        <end position="683"/>
    </location>
</feature>
<feature type="topological domain" description="Extracellular" evidence="3">
    <location>
        <begin position="23"/>
        <end position="211"/>
    </location>
</feature>
<feature type="transmembrane region" description="Helical" evidence="3">
    <location>
        <begin position="212"/>
        <end position="232"/>
    </location>
</feature>
<feature type="topological domain" description="Cytoplasmic" evidence="3">
    <location>
        <begin position="233"/>
        <end position="683"/>
    </location>
</feature>
<feature type="domain" description="EF-hand 1" evidence="2">
    <location>
        <begin position="62"/>
        <end position="95"/>
    </location>
</feature>
<feature type="domain" description="EF-hand 2" evidence="2">
    <location>
        <begin position="100"/>
        <end position="124"/>
    </location>
</feature>
<feature type="domain" description="SAM" evidence="4">
    <location>
        <begin position="130"/>
        <end position="198"/>
    </location>
</feature>
<feature type="region of interest" description="SOAR/CAD" evidence="2">
    <location>
        <begin position="342"/>
        <end position="440"/>
    </location>
</feature>
<feature type="region of interest" description="Contributes to fast Ca(2+)-dependent inactivation of CRAC channels" evidence="2">
    <location>
        <begin position="473"/>
        <end position="481"/>
    </location>
</feature>
<feature type="region of interest" description="Disordered" evidence="5">
    <location>
        <begin position="488"/>
        <end position="535"/>
    </location>
</feature>
<feature type="region of interest" description="Disordered" evidence="5">
    <location>
        <begin position="597"/>
        <end position="683"/>
    </location>
</feature>
<feature type="region of interest" description="Required for generation of inwardly rectifying CRAC currents" evidence="2">
    <location>
        <begin position="670"/>
        <end position="683"/>
    </location>
</feature>
<feature type="coiled-coil region" evidence="2">
    <location>
        <begin position="246"/>
        <end position="440"/>
    </location>
</feature>
<feature type="short sequence motif" description="Microtubule tip localization signal" evidence="2">
    <location>
        <begin position="640"/>
        <end position="643"/>
    </location>
</feature>
<feature type="compositionally biased region" description="Low complexity" evidence="5">
    <location>
        <begin position="488"/>
        <end position="497"/>
    </location>
</feature>
<feature type="compositionally biased region" description="Basic and acidic residues" evidence="5">
    <location>
        <begin position="513"/>
        <end position="530"/>
    </location>
</feature>
<feature type="compositionally biased region" description="Acidic residues" evidence="5">
    <location>
        <begin position="653"/>
        <end position="664"/>
    </location>
</feature>
<feature type="compositionally biased region" description="Basic residues" evidence="5">
    <location>
        <begin position="668"/>
        <end position="683"/>
    </location>
</feature>
<feature type="binding site" evidence="2">
    <location>
        <position position="74"/>
    </location>
    <ligand>
        <name>Ca(2+)</name>
        <dbReference type="ChEBI" id="CHEBI:29108"/>
    </ligand>
</feature>
<feature type="binding site" evidence="2">
    <location>
        <position position="76"/>
    </location>
    <ligand>
        <name>Ca(2+)</name>
        <dbReference type="ChEBI" id="CHEBI:29108"/>
    </ligand>
</feature>
<feature type="binding site" evidence="2">
    <location>
        <position position="78"/>
    </location>
    <ligand>
        <name>Ca(2+)</name>
        <dbReference type="ChEBI" id="CHEBI:29108"/>
    </ligand>
</feature>
<feature type="binding site" evidence="2">
    <location>
        <position position="80"/>
    </location>
    <ligand>
        <name>Ca(2+)</name>
        <dbReference type="ChEBI" id="CHEBI:29108"/>
    </ligand>
</feature>
<feature type="binding site" evidence="2">
    <location>
        <position position="85"/>
    </location>
    <ligand>
        <name>Ca(2+)</name>
        <dbReference type="ChEBI" id="CHEBI:29108"/>
    </ligand>
</feature>
<feature type="modified residue" description="Phosphoserine" evidence="2">
    <location>
        <position position="255"/>
    </location>
</feature>
<feature type="modified residue" description="Phosphothreonine" evidence="1">
    <location>
        <position position="502"/>
    </location>
</feature>
<feature type="modified residue" description="Phosphoserine" evidence="2">
    <location>
        <position position="510"/>
    </location>
</feature>
<feature type="modified residue" description="Phosphothreonine" evidence="2">
    <location>
        <position position="515"/>
    </location>
</feature>
<feature type="modified residue" description="Phosphoserine" evidence="2">
    <location>
        <position position="517"/>
    </location>
</feature>
<feature type="modified residue" description="Phosphoserine" evidence="2">
    <location>
        <position position="519"/>
    </location>
</feature>
<feature type="modified residue" description="Phosphoserine" evidence="2">
    <location>
        <position position="521"/>
    </location>
</feature>
<feature type="modified residue" description="Phosphoserine" evidence="1">
    <location>
        <position position="522"/>
    </location>
</feature>
<feature type="modified residue" description="Phosphoserine" evidence="2">
    <location>
        <position position="565"/>
    </location>
</feature>
<feature type="modified residue" description="Phosphoserine" evidence="2">
    <location>
        <position position="573"/>
    </location>
</feature>
<feature type="modified residue" description="Phosphoserine" evidence="2">
    <location>
        <position position="606"/>
    </location>
</feature>
<feature type="modified residue" description="Phosphoserine" evidence="2">
    <location>
        <position position="616"/>
    </location>
</feature>
<feature type="modified residue" description="Phosphoserine" evidence="2">
    <location>
        <position position="626"/>
    </location>
</feature>
<feature type="modified residue" description="Phosphoserine" evidence="2">
    <location>
        <position position="658"/>
    </location>
</feature>
<feature type="modified residue" description="Phosphothreonine" evidence="2">
    <location>
        <position position="663"/>
    </location>
</feature>
<feature type="modified residue" description="Phosphoserine" evidence="2">
    <location>
        <position position="666"/>
    </location>
</feature>
<feature type="glycosylation site" description="N-linked (GlcNAc...) asparagine" evidence="2">
    <location>
        <position position="129"/>
    </location>
</feature>
<feature type="glycosylation site" description="N-linked (GlcNAc...) asparagine" evidence="2">
    <location>
        <position position="169"/>
    </location>
</feature>
<comment type="function">
    <text evidence="2">Acts as a Ca(2+) sensor that gates two major inward rectifying Ca(2+) channels at the plasma membrane: Ca(2+) release-activated Ca(2+) (CRAC) channels and arachidonate-regulated Ca(2+)-selective (ARC) channels (By similarity). Plays a role in mediating store-operated Ca(2+) entry (SOCE), a Ca(2+) influx following depletion of intracellular Ca(2+) stores. Upon Ca(2+) depletion, translocates from the endoplasmic reticulum to the plasma membrane where it activates CRAC channel pore-forming subunits ORA1, ORA2 and ORAI3 to generate sustained and oscillatory Ca(2+) entry (By similarity). Involved in enamel formation (By similarity).</text>
</comment>
<comment type="subunit">
    <text evidence="1 2">Monomer in the presence of Ca(2+). It oligomerizes in absence of Ca(2+). Forms homooligomers and heterooligomers with STIM2. Interacts with pore-forming subunits of CRAC channels, ORAI1, ORAI2 and ORAI3; this interaction is potentiated upon Ca(2+) store depletion. Interacts (via the transmembrane region and the SOAR/CAD domain) with SPPL3; the interaction promotes the binding of STIM1 to ORAI1. Interacts with ORAI1. Interacts with MAPRE1; probably required for targeting to the growing microtubule plus ends. Interacts with CRACR2A/EFCAB4B; the interaction is direct and takes place in absence of Ca(2+). Forms a complex with CRACR2A/EFCAB4B and ORAI1 at low concentration of Ca(2+), the complex dissociates at elevated Ca(2+) concentrations. Interacts with SARAF, promoting a slow inactivation of STIM1-dependent SOCE activity, possibly by facilitating the deoligomerization of STIM1 (By similarity). Interacts with EFHB; the interaction takes place upon Ca(2+)-store depletion and inhibits the association with SARAF (By similarity). Interacts with ASPH. Interacts with SLC35G1; intracellular Ca(2+)-dependent. May interact with ATP1A1, ATP2A2, ATP2B1, ATP2B4, KPNB1 and XPO1; through SLC35G1. Interacts with TMEM203. Interacts with STIMATE, promoting STIM1 conformational switch (By similarity). Interacts with TMEM178A (By similarity). Interacts with CASQ1 (via C-terminal end and preferentially with the monomeric form); this interaction increases in response to a depletion of intracellular calcium, decreases both STIM1 aggregation and clustering, interaction of STIM1 with ORAI1 and store-operated Ca(2+) entry (SOCE) activity (By similarity).</text>
</comment>
<comment type="subcellular location">
    <subcellularLocation>
        <location evidence="2">Cell membrane</location>
        <topology evidence="2">Single-pass type I membrane protein</topology>
    </subcellularLocation>
    <subcellularLocation>
        <location evidence="2">Endoplasmic reticulum membrane</location>
        <topology evidence="2">Single-pass type I membrane protein</topology>
    </subcellularLocation>
    <subcellularLocation>
        <location evidence="2">Sarcoplasmic reticulum</location>
    </subcellularLocation>
    <subcellularLocation>
        <location evidence="2">Cytoplasm</location>
        <location evidence="2">Cytoskeleton</location>
    </subcellularLocation>
    <text evidence="2">Translocates from the endoplasmic reticulum to the cell membrane in response to a depletion of intracellular Ca(2+) and is detected at punctae corresponding to junctions between the endoplasmic reticulum and the cell membrane. Associated with the microtubule network at the growing distal tip of microtubules. Colocalizes with ORAI1 at the cell membrane. Colocalizes preferentially with CASQ1 at endoplasmic reticulum in response to a depletion of intracellular calcium (By similarity).</text>
</comment>
<comment type="domain">
    <text evidence="2">The microtubule tip localization signal (MtLS) motif; mediates interaction with MAPRE1 and targeting to the growing microtubule plus ends.</text>
</comment>
<comment type="domain">
    <text evidence="2">The EF-hand domain is responsible for Ca(2+) sensitivity. It consists of a canonical helix-loop-helix EF motif (alpha1beta1alpha2; EF-hand 1) paired to a second helix-loop-helix EF motif (alpha3beta2alpha4; EF-hand 2). EF-hand 1 binds Ca(2+) whereas EF-hand 2 mediates the interactions with SAM domain.</text>
</comment>
<comment type="domain">
    <text evidence="2">The sterile alpha motif (SAM) domain folds into a characteristic 5-helix bundle (alpha6-alpha10) which interacts with the EF-hand pairs enabling concerted folding and stability of EF-hand and SAM domains.</text>
</comment>
<comment type="domain">
    <text evidence="2">The STIM1 Orai-activating region/CRAC-activating domain (SOAR/CAD) directly interacts with ORAI1 subunits and mediates CRAC channel gating.</text>
</comment>
<comment type="domain">
    <text evidence="2">The polybasic Lys-rich region (residues 672-685) functionally interacts with the Pro-rich region of ORAI1 (residues 3-47) and regulates CRAC channel gating at negative membrane potentials.</text>
</comment>
<comment type="PTM">
    <text evidence="2">Glycosylation is required for cell surface expression.</text>
</comment>
<comment type="PTM">
    <text evidence="2">Phosphorylated predominantly on Ser residues.</text>
</comment>